<evidence type="ECO:0000255" key="1">
    <source>
        <dbReference type="HAMAP-Rule" id="MF_01270"/>
    </source>
</evidence>
<keyword id="KW-0067">ATP-binding</keyword>
<keyword id="KW-0119">Carbohydrate metabolism</keyword>
<keyword id="KW-0418">Kinase</keyword>
<keyword id="KW-0547">Nucleotide-binding</keyword>
<keyword id="KW-0808">Transferase</keyword>
<name>ANMK_SALPB</name>
<organism>
    <name type="scientific">Salmonella paratyphi B (strain ATCC BAA-1250 / SPB7)</name>
    <dbReference type="NCBI Taxonomy" id="1016998"/>
    <lineage>
        <taxon>Bacteria</taxon>
        <taxon>Pseudomonadati</taxon>
        <taxon>Pseudomonadota</taxon>
        <taxon>Gammaproteobacteria</taxon>
        <taxon>Enterobacterales</taxon>
        <taxon>Enterobacteriaceae</taxon>
        <taxon>Salmonella</taxon>
    </lineage>
</organism>
<reference key="1">
    <citation type="submission" date="2007-11" db="EMBL/GenBank/DDBJ databases">
        <authorList>
            <consortium name="The Salmonella enterica serovar Paratyphi B Genome Sequencing Project"/>
            <person name="McClelland M."/>
            <person name="Sanderson E.K."/>
            <person name="Porwollik S."/>
            <person name="Spieth J."/>
            <person name="Clifton W.S."/>
            <person name="Fulton R."/>
            <person name="Cordes M."/>
            <person name="Wollam A."/>
            <person name="Shah N."/>
            <person name="Pepin K."/>
            <person name="Bhonagiri V."/>
            <person name="Nash W."/>
            <person name="Johnson M."/>
            <person name="Thiruvilangam P."/>
            <person name="Wilson R."/>
        </authorList>
    </citation>
    <scope>NUCLEOTIDE SEQUENCE [LARGE SCALE GENOMIC DNA]</scope>
    <source>
        <strain>ATCC BAA-1250 / SPB7</strain>
    </source>
</reference>
<sequence length="373" mass="39796">MKSGRFIGVMSGTSLDGVDVVLAAIDETMVAQQASLTWPIPVHLKKGILDICQGQPLTLSQLGQLDTQLGRLFAQAVNALLAQQRLQPRDIVAIGCHGQTVWHEPTGEAPHTLQIGDNNHIVAHTGITVVGDFRRRDIALGGQGAPLVPAFHHALLGHPTEKRMVLNIGGIANLSLLFPGQAVRGYDTGPGNMLMDAWIWRQCAQPYDKDAAWAKEGQVILPLLQKMLRDPYFAASAPKSTGREYFNYGWLERHLTAFPGADARDVQATLAELTAVSIAQQVLLNGGCERLMVCGGGSRNPLVMARLAALLPGIEVSTTDKAGISGDDMEALAFAWLAWRTLAGLPGNLPSVTGATEASVLGAIYPANPITQS</sequence>
<proteinExistence type="inferred from homology"/>
<accession>A9N037</accession>
<feature type="chain" id="PRO_1000085836" description="Anhydro-N-acetylmuramic acid kinase">
    <location>
        <begin position="1"/>
        <end position="373"/>
    </location>
</feature>
<feature type="binding site" evidence="1">
    <location>
        <begin position="12"/>
        <end position="19"/>
    </location>
    <ligand>
        <name>ATP</name>
        <dbReference type="ChEBI" id="CHEBI:30616"/>
    </ligand>
</feature>
<comment type="function">
    <text evidence="1">Catalyzes the specific phosphorylation of 1,6-anhydro-N-acetylmuramic acid (anhMurNAc) with the simultaneous cleavage of the 1,6-anhydro ring, generating MurNAc-6-P. Is required for the utilization of anhMurNAc either imported from the medium or derived from its own cell wall murein, and thus plays a role in cell wall recycling.</text>
</comment>
<comment type="catalytic activity">
    <reaction evidence="1">
        <text>1,6-anhydro-N-acetyl-beta-muramate + ATP + H2O = N-acetyl-D-muramate 6-phosphate + ADP + H(+)</text>
        <dbReference type="Rhea" id="RHEA:24952"/>
        <dbReference type="ChEBI" id="CHEBI:15377"/>
        <dbReference type="ChEBI" id="CHEBI:15378"/>
        <dbReference type="ChEBI" id="CHEBI:30616"/>
        <dbReference type="ChEBI" id="CHEBI:58690"/>
        <dbReference type="ChEBI" id="CHEBI:58722"/>
        <dbReference type="ChEBI" id="CHEBI:456216"/>
        <dbReference type="EC" id="2.7.1.170"/>
    </reaction>
</comment>
<comment type="pathway">
    <text evidence="1">Amino-sugar metabolism; 1,6-anhydro-N-acetylmuramate degradation.</text>
</comment>
<comment type="pathway">
    <text evidence="1">Cell wall biogenesis; peptidoglycan recycling.</text>
</comment>
<comment type="similarity">
    <text evidence="1">Belongs to the anhydro-N-acetylmuramic acid kinase family.</text>
</comment>
<gene>
    <name evidence="1" type="primary">anmK</name>
    <name type="ordered locus">SPAB_01875</name>
</gene>
<dbReference type="EC" id="2.7.1.170" evidence="1"/>
<dbReference type="EMBL" id="CP000886">
    <property type="protein sequence ID" value="ABX67268.1"/>
    <property type="molecule type" value="Genomic_DNA"/>
</dbReference>
<dbReference type="RefSeq" id="WP_000835021.1">
    <property type="nucleotide sequence ID" value="NC_010102.1"/>
</dbReference>
<dbReference type="SMR" id="A9N037"/>
<dbReference type="KEGG" id="spq:SPAB_01875"/>
<dbReference type="PATRIC" id="fig|1016998.12.peg.1767"/>
<dbReference type="HOGENOM" id="CLU_038782_0_0_6"/>
<dbReference type="BioCyc" id="SENT1016998:SPAB_RS07615-MONOMER"/>
<dbReference type="UniPathway" id="UPA00343"/>
<dbReference type="UniPathway" id="UPA00544"/>
<dbReference type="Proteomes" id="UP000008556">
    <property type="component" value="Chromosome"/>
</dbReference>
<dbReference type="GO" id="GO:0005524">
    <property type="term" value="F:ATP binding"/>
    <property type="evidence" value="ECO:0007669"/>
    <property type="project" value="UniProtKB-UniRule"/>
</dbReference>
<dbReference type="GO" id="GO:0016301">
    <property type="term" value="F:kinase activity"/>
    <property type="evidence" value="ECO:0007669"/>
    <property type="project" value="UniProtKB-KW"/>
</dbReference>
<dbReference type="GO" id="GO:0016773">
    <property type="term" value="F:phosphotransferase activity, alcohol group as acceptor"/>
    <property type="evidence" value="ECO:0007669"/>
    <property type="project" value="UniProtKB-UniRule"/>
</dbReference>
<dbReference type="GO" id="GO:0097175">
    <property type="term" value="P:1,6-anhydro-N-acetyl-beta-muramic acid catabolic process"/>
    <property type="evidence" value="ECO:0007669"/>
    <property type="project" value="UniProtKB-UniRule"/>
</dbReference>
<dbReference type="GO" id="GO:0006040">
    <property type="term" value="P:amino sugar metabolic process"/>
    <property type="evidence" value="ECO:0007669"/>
    <property type="project" value="InterPro"/>
</dbReference>
<dbReference type="GO" id="GO:0009254">
    <property type="term" value="P:peptidoglycan turnover"/>
    <property type="evidence" value="ECO:0007669"/>
    <property type="project" value="UniProtKB-UniRule"/>
</dbReference>
<dbReference type="CDD" id="cd24050">
    <property type="entry name" value="ASKHA_NBD_ANMK"/>
    <property type="match status" value="1"/>
</dbReference>
<dbReference type="Gene3D" id="3.30.420.40">
    <property type="match status" value="2"/>
</dbReference>
<dbReference type="HAMAP" id="MF_01270">
    <property type="entry name" value="AnhMurNAc_kinase"/>
    <property type="match status" value="1"/>
</dbReference>
<dbReference type="InterPro" id="IPR005338">
    <property type="entry name" value="Anhydro_N_Ac-Mur_kinase"/>
</dbReference>
<dbReference type="InterPro" id="IPR043129">
    <property type="entry name" value="ATPase_NBD"/>
</dbReference>
<dbReference type="NCBIfam" id="NF007138">
    <property type="entry name" value="PRK09585.1-1"/>
    <property type="match status" value="1"/>
</dbReference>
<dbReference type="NCBIfam" id="NF007139">
    <property type="entry name" value="PRK09585.1-3"/>
    <property type="match status" value="1"/>
</dbReference>
<dbReference type="NCBIfam" id="NF007148">
    <property type="entry name" value="PRK09585.3-2"/>
    <property type="match status" value="1"/>
</dbReference>
<dbReference type="PANTHER" id="PTHR30605">
    <property type="entry name" value="ANHYDRO-N-ACETYLMURAMIC ACID KINASE"/>
    <property type="match status" value="1"/>
</dbReference>
<dbReference type="PANTHER" id="PTHR30605:SF0">
    <property type="entry name" value="ANHYDRO-N-ACETYLMURAMIC ACID KINASE"/>
    <property type="match status" value="1"/>
</dbReference>
<dbReference type="Pfam" id="PF03702">
    <property type="entry name" value="AnmK"/>
    <property type="match status" value="1"/>
</dbReference>
<dbReference type="SUPFAM" id="SSF53067">
    <property type="entry name" value="Actin-like ATPase domain"/>
    <property type="match status" value="1"/>
</dbReference>
<protein>
    <recommendedName>
        <fullName evidence="1">Anhydro-N-acetylmuramic acid kinase</fullName>
        <ecNumber evidence="1">2.7.1.170</ecNumber>
    </recommendedName>
    <alternativeName>
        <fullName evidence="1">AnhMurNAc kinase</fullName>
    </alternativeName>
</protein>